<name>PMP15_CHLPN</name>
<evidence type="ECO:0000255" key="1"/>
<evidence type="ECO:0000255" key="2">
    <source>
        <dbReference type="PROSITE-ProRule" id="PRU00556"/>
    </source>
</evidence>
<evidence type="ECO:0000305" key="3"/>
<feature type="signal peptide" evidence="1">
    <location>
        <begin position="1"/>
        <end position="17"/>
    </location>
</feature>
<feature type="chain" id="PRO_0000024745" description="Probable outer membrane protein pmp15">
    <location>
        <begin position="18"/>
        <end position="938"/>
    </location>
</feature>
<feature type="domain" description="Autotransporter" evidence="2">
    <location>
        <begin position="659"/>
        <end position="938"/>
    </location>
</feature>
<feature type="sequence conflict" description="In Ref. 4; AAP98415." evidence="3" ref="4">
    <original>S</original>
    <variation>A</variation>
    <location>
        <position position="326"/>
    </location>
</feature>
<dbReference type="EMBL" id="AE001363">
    <property type="protein sequence ID" value="AAD18608.1"/>
    <property type="molecule type" value="Genomic_DNA"/>
</dbReference>
<dbReference type="EMBL" id="AE002161">
    <property type="protein sequence ID" value="AAF38143.1"/>
    <property type="molecule type" value="Genomic_DNA"/>
</dbReference>
<dbReference type="EMBL" id="BA000008">
    <property type="protein sequence ID" value="BAA98672.1"/>
    <property type="molecule type" value="Genomic_DNA"/>
</dbReference>
<dbReference type="EMBL" id="AE009440">
    <property type="protein sequence ID" value="AAP98415.1"/>
    <property type="status" value="ALT_INIT"/>
    <property type="molecule type" value="Genomic_DNA"/>
</dbReference>
<dbReference type="PIR" id="F86548">
    <property type="entry name" value="F86548"/>
</dbReference>
<dbReference type="PIR" id="H72074">
    <property type="entry name" value="H72074"/>
</dbReference>
<dbReference type="RefSeq" id="NP_224664.1">
    <property type="nucleotide sequence ID" value="NC_000922.1"/>
</dbReference>
<dbReference type="RefSeq" id="WP_010883106.1">
    <property type="nucleotide sequence ID" value="NZ_LN847257.1"/>
</dbReference>
<dbReference type="STRING" id="406984.CPK_ORF00981"/>
<dbReference type="KEGG" id="cpa:CP_0286"/>
<dbReference type="KEGG" id="cpj:pmp_15"/>
<dbReference type="KEGG" id="cpn:CPn_0466"/>
<dbReference type="KEGG" id="cpt:CpB0484"/>
<dbReference type="PATRIC" id="fig|115713.3.peg.522"/>
<dbReference type="eggNOG" id="COG3210">
    <property type="taxonomic scope" value="Bacteria"/>
</dbReference>
<dbReference type="HOGENOM" id="CLU_004549_2_0_0"/>
<dbReference type="OrthoDB" id="16673at2"/>
<dbReference type="Proteomes" id="UP000000583">
    <property type="component" value="Chromosome"/>
</dbReference>
<dbReference type="Proteomes" id="UP000000801">
    <property type="component" value="Chromosome"/>
</dbReference>
<dbReference type="GO" id="GO:0009279">
    <property type="term" value="C:cell outer membrane"/>
    <property type="evidence" value="ECO:0007669"/>
    <property type="project" value="UniProtKB-SubCell"/>
</dbReference>
<dbReference type="GO" id="GO:0005576">
    <property type="term" value="C:extracellular region"/>
    <property type="evidence" value="ECO:0007669"/>
    <property type="project" value="UniProtKB-KW"/>
</dbReference>
<dbReference type="Gene3D" id="2.40.128.130">
    <property type="entry name" value="Autotransporter beta-domain"/>
    <property type="match status" value="1"/>
</dbReference>
<dbReference type="InterPro" id="IPR005546">
    <property type="entry name" value="Autotransporte_beta"/>
</dbReference>
<dbReference type="InterPro" id="IPR036709">
    <property type="entry name" value="Autotransporte_beta_dom_sf"/>
</dbReference>
<dbReference type="InterPro" id="IPR011427">
    <property type="entry name" value="Polymorphic_membr_middle"/>
</dbReference>
<dbReference type="InterPro" id="IPR003368">
    <property type="entry name" value="POMP_repeat"/>
</dbReference>
<dbReference type="NCBIfam" id="TIGR01376">
    <property type="entry name" value="POMP_repeat"/>
    <property type="match status" value="4"/>
</dbReference>
<dbReference type="Pfam" id="PF03797">
    <property type="entry name" value="Autotransporter"/>
    <property type="match status" value="1"/>
</dbReference>
<dbReference type="Pfam" id="PF02415">
    <property type="entry name" value="Chlam_PMP"/>
    <property type="match status" value="2"/>
</dbReference>
<dbReference type="Pfam" id="PF07548">
    <property type="entry name" value="ChlamPMP_M"/>
    <property type="match status" value="1"/>
</dbReference>
<dbReference type="SMART" id="SM00869">
    <property type="entry name" value="Autotransporter"/>
    <property type="match status" value="1"/>
</dbReference>
<dbReference type="SUPFAM" id="SSF103515">
    <property type="entry name" value="Autotransporter"/>
    <property type="match status" value="1"/>
</dbReference>
<dbReference type="PROSITE" id="PS51208">
    <property type="entry name" value="AUTOTRANSPORTER"/>
    <property type="match status" value="1"/>
</dbReference>
<sequence length="938" mass="102194">MRFFCFGMLLPFTFVLANEGLQLPLETYITLSPEYQAAPQVGFTHNQNQDLAIVGNHNDFILDYKYYRSNGGALTCKNLLISENIGNVFFEKNVCPNSGGAIYAAQNCTISKNQNYAFTTNLVSDNPTATAGSLLGGALFAINCSITNNLGQGTFVDNLALNKGGALYTETNLSIKDNKGPIIIKQNRALNSDSLGGGIYSGNSLNIEGNSGAIQITSNSSGSGGGIFSTQTLTISSNKKLIEISENSAFANNYGSNFNPGGGGLTTTFCTILNNREGVLFNNNQSQSNGGAIHAKSIIIKENGPVYFLNNTATRGGALLNLSAGSGNGSFILSADNGDIIFNNNTASKHALNPPYRNAIHSTPNMNLQIGARPGYRVLFYDPIEHELPSSFPILFNFETGHTGTVLFSGEHVHQNFTDEMNFFSYLRNTSELRQGVLAVEDGAGLACYKFFQRGGTLLLGQGAVITTAGTIPTPSSTPTTVGSTITLNHIAIDLPSILSFQAQAPKIWIYPTKTGSTYTEDSNPTITISGTLTLRNSNNEDPYDSLDLSHSLEKVPLLYIVDVAAQKINSSQLDLSTLNSGEHYGYQGIWSTYWVETTTITNPTSLLGANTKHKLLYANWSPLGYRPHPERRGEFITNALWQSAYTALAGLHSLSSWDEEKGHAASLQGIGLLVHQKDKNGFKGFRSHMTGYSATTEATSSQSPNFSLGFAQFFSKAKEHESQNSTSSHHYFSGMCIENTLFKEWIRLSVSLAYMFTSEHTHTMYQGLLEGNSQGSFHNHTLAGALSCVFLPQPHGESLQIYPFITALAIRGNLAAFQESGDHAREFSLHRPLTDVSLPVGIRASWKNHHRVPLVWLTEISYRSTLYRQDPELHSKLLISQGTWTTQATPVTYNALGIKVKNTMQVFPKVTLSLDYSADISSSTLSHYLNVASRMRF</sequence>
<gene>
    <name type="primary">pmp15</name>
    <name type="ordered locus">CPn_0466</name>
    <name type="ordered locus">CP_0286</name>
    <name type="ordered locus">CpB0484</name>
</gene>
<comment type="subcellular location">
    <subcellularLocation>
        <location>Secreted</location>
        <location>Cell wall</location>
    </subcellularLocation>
    <subcellularLocation>
        <location evidence="3">Cell outer membrane</location>
        <topology evidence="3">Peripheral membrane protein</topology>
        <orientation evidence="3">Extracellular side</orientation>
    </subcellularLocation>
</comment>
<comment type="developmental stage">
    <text>Elementary body.</text>
</comment>
<comment type="similarity">
    <text evidence="3">Belongs to the PMP outer membrane protein family.</text>
</comment>
<comment type="sequence caution" evidence="3">
    <conflict type="erroneous initiation">
        <sequence resource="EMBL-CDS" id="AAP98415"/>
    </conflict>
</comment>
<reference key="1">
    <citation type="journal article" date="1999" name="Nat. Genet.">
        <title>Comparative genomes of Chlamydia pneumoniae and C. trachomatis.</title>
        <authorList>
            <person name="Kalman S."/>
            <person name="Mitchell W.P."/>
            <person name="Marathe R."/>
            <person name="Lammel C.J."/>
            <person name="Fan J."/>
            <person name="Hyman R.W."/>
            <person name="Olinger L."/>
            <person name="Grimwood J."/>
            <person name="Davis R.W."/>
            <person name="Stephens R.S."/>
        </authorList>
    </citation>
    <scope>NUCLEOTIDE SEQUENCE [LARGE SCALE GENOMIC DNA]</scope>
    <source>
        <strain>CWL029</strain>
    </source>
</reference>
<reference key="2">
    <citation type="journal article" date="2000" name="Nucleic Acids Res.">
        <title>Genome sequences of Chlamydia trachomatis MoPn and Chlamydia pneumoniae AR39.</title>
        <authorList>
            <person name="Read T.D."/>
            <person name="Brunham R.C."/>
            <person name="Shen C."/>
            <person name="Gill S.R."/>
            <person name="Heidelberg J.F."/>
            <person name="White O."/>
            <person name="Hickey E.K."/>
            <person name="Peterson J.D."/>
            <person name="Utterback T.R."/>
            <person name="Berry K.J."/>
            <person name="Bass S."/>
            <person name="Linher K.D."/>
            <person name="Weidman J.F."/>
            <person name="Khouri H.M."/>
            <person name="Craven B."/>
            <person name="Bowman C."/>
            <person name="Dodson R.J."/>
            <person name="Gwinn M.L."/>
            <person name="Nelson W.C."/>
            <person name="DeBoy R.T."/>
            <person name="Kolonay J.F."/>
            <person name="McClarty G."/>
            <person name="Salzberg S.L."/>
            <person name="Eisen J.A."/>
            <person name="Fraser C.M."/>
        </authorList>
    </citation>
    <scope>NUCLEOTIDE SEQUENCE [LARGE SCALE GENOMIC DNA]</scope>
    <source>
        <strain>AR39</strain>
    </source>
</reference>
<reference key="3">
    <citation type="journal article" date="2000" name="Nucleic Acids Res.">
        <title>Comparison of whole genome sequences of Chlamydia pneumoniae J138 from Japan and CWL029 from USA.</title>
        <authorList>
            <person name="Shirai M."/>
            <person name="Hirakawa H."/>
            <person name="Kimoto M."/>
            <person name="Tabuchi M."/>
            <person name="Kishi F."/>
            <person name="Ouchi K."/>
            <person name="Shiba T."/>
            <person name="Ishii K."/>
            <person name="Hattori M."/>
            <person name="Kuhara S."/>
            <person name="Nakazawa T."/>
        </authorList>
    </citation>
    <scope>NUCLEOTIDE SEQUENCE [LARGE SCALE GENOMIC DNA]</scope>
    <source>
        <strain>J138</strain>
    </source>
</reference>
<reference key="4">
    <citation type="submission" date="2002-05" db="EMBL/GenBank/DDBJ databases">
        <title>The genome sequence of Chlamydia pneumoniae TW183 and comparison with other Chlamydia strains based on whole genome sequence analysis.</title>
        <authorList>
            <person name="Geng M.M."/>
            <person name="Schuhmacher A."/>
            <person name="Muehldorfer I."/>
            <person name="Bensch K.W."/>
            <person name="Schaefer K.P."/>
            <person name="Schneider S."/>
            <person name="Pohl T."/>
            <person name="Essig A."/>
            <person name="Marre R."/>
            <person name="Melchers K."/>
        </authorList>
    </citation>
    <scope>NUCLEOTIDE SEQUENCE [LARGE SCALE GENOMIC DNA]</scope>
    <source>
        <strain>TW-183</strain>
    </source>
</reference>
<proteinExistence type="evidence at transcript level"/>
<protein>
    <recommendedName>
        <fullName>Probable outer membrane protein pmp15</fullName>
    </recommendedName>
    <alternativeName>
        <fullName>Polymorphic membrane protein 15</fullName>
    </alternativeName>
</protein>
<organism>
    <name type="scientific">Chlamydia pneumoniae</name>
    <name type="common">Chlamydophila pneumoniae</name>
    <dbReference type="NCBI Taxonomy" id="83558"/>
    <lineage>
        <taxon>Bacteria</taxon>
        <taxon>Pseudomonadati</taxon>
        <taxon>Chlamydiota</taxon>
        <taxon>Chlamydiia</taxon>
        <taxon>Chlamydiales</taxon>
        <taxon>Chlamydiaceae</taxon>
        <taxon>Chlamydia/Chlamydophila group</taxon>
        <taxon>Chlamydia</taxon>
    </lineage>
</organism>
<keyword id="KW-0998">Cell outer membrane</keyword>
<keyword id="KW-0134">Cell wall</keyword>
<keyword id="KW-0472">Membrane</keyword>
<keyword id="KW-0964">Secreted</keyword>
<keyword id="KW-0732">Signal</keyword>
<keyword id="KW-0812">Transmembrane</keyword>
<keyword id="KW-1134">Transmembrane beta strand</keyword>
<accession>Q9Z883</accession>